<accession>P41902</accession>
<accession>D6W296</accession>
<comment type="function">
    <text>Critical role in copper (specific) homeostasis and detoxification. May protect by directly chelating and sequestering copper ions.</text>
</comment>
<comment type="similarity">
    <text evidence="1">Belongs to the metallothionein superfamily. Type 13 family.</text>
</comment>
<comment type="caution">
    <text evidence="2">Could be the product of a pseudogene unlikely to encode a functional protein. Strain S288c has a stop codon in position 9, which disrupts the gene coding for this protein. Because of that it is not part of the S.cerevisiae S288c complete/reference proteome set.</text>
</comment>
<comment type="sequence caution" evidence="1">
    <conflict type="erroneous termination">
        <sequence resource="EMBL" id="X87331"/>
    </conflict>
    <text>Truncated C-terminus.</text>
</comment>
<comment type="sequence caution" evidence="1">
    <conflict type="erroneous termination">
        <sequence resource="EMBL" id="Z74939"/>
    </conflict>
    <text>Truncated C-terminus.</text>
</comment>
<gene>
    <name type="primary">CRS5</name>
    <name type="ordered locus">YOR031W</name>
    <name type="ORF">O2675</name>
</gene>
<proteinExistence type="uncertain"/>
<organism>
    <name type="scientific">Saccharomyces cerevisiae (strain ATCC 204508 / S288c)</name>
    <name type="common">Baker's yeast</name>
    <dbReference type="NCBI Taxonomy" id="559292"/>
    <lineage>
        <taxon>Eukaryota</taxon>
        <taxon>Fungi</taxon>
        <taxon>Dikarya</taxon>
        <taxon>Ascomycota</taxon>
        <taxon>Saccharomycotina</taxon>
        <taxon>Saccharomycetes</taxon>
        <taxon>Saccharomycetales</taxon>
        <taxon>Saccharomycetaceae</taxon>
        <taxon>Saccharomyces</taxon>
    </lineage>
</organism>
<feature type="chain" id="PRO_0000197370" description="Metallothionein-like protein CRS5">
    <location>
        <begin position="1"/>
        <end position="69"/>
    </location>
</feature>
<keyword id="KW-0186">Copper</keyword>
<keyword id="KW-0479">Metal-binding</keyword>
<keyword id="KW-0480">Metal-thiolate cluster</keyword>
<name>CRS5_YEAST</name>
<reference key="1">
    <citation type="journal article" date="1994" name="J. Biol. Chem.">
        <title>CRS5 encodes a metallothionein-like protein in Saccharomyces cerevisiae.</title>
        <authorList>
            <person name="Culotta V.C."/>
            <person name="Howard W.R."/>
            <person name="Liu X.F."/>
        </authorList>
    </citation>
    <scope>NUCLEOTIDE SEQUENCE [GENOMIC DNA]</scope>
    <source>
        <strain>XL2d.7-6</strain>
    </source>
</reference>
<reference key="2">
    <citation type="journal article" date="1997" name="Nature">
        <title>The nucleotide sequence of Saccharomyces cerevisiae chromosome XV.</title>
        <authorList>
            <person name="Dujon B."/>
            <person name="Albermann K."/>
            <person name="Aldea M."/>
            <person name="Alexandraki D."/>
            <person name="Ansorge W."/>
            <person name="Arino J."/>
            <person name="Benes V."/>
            <person name="Bohn C."/>
            <person name="Bolotin-Fukuhara M."/>
            <person name="Bordonne R."/>
            <person name="Boyer J."/>
            <person name="Camasses A."/>
            <person name="Casamayor A."/>
            <person name="Casas C."/>
            <person name="Cheret G."/>
            <person name="Cziepluch C."/>
            <person name="Daignan-Fornier B."/>
            <person name="Dang V.-D."/>
            <person name="de Haan M."/>
            <person name="Delius H."/>
            <person name="Durand P."/>
            <person name="Fairhead C."/>
            <person name="Feldmann H."/>
            <person name="Gaillon L."/>
            <person name="Galisson F."/>
            <person name="Gamo F.-J."/>
            <person name="Gancedo C."/>
            <person name="Goffeau A."/>
            <person name="Goulding S.E."/>
            <person name="Grivell L.A."/>
            <person name="Habbig B."/>
            <person name="Hand N.J."/>
            <person name="Hani J."/>
            <person name="Hattenhorst U."/>
            <person name="Hebling U."/>
            <person name="Hernando Y."/>
            <person name="Herrero E."/>
            <person name="Heumann K."/>
            <person name="Hiesel R."/>
            <person name="Hilger F."/>
            <person name="Hofmann B."/>
            <person name="Hollenberg C.P."/>
            <person name="Hughes B."/>
            <person name="Jauniaux J.-C."/>
            <person name="Kalogeropoulos A."/>
            <person name="Katsoulou C."/>
            <person name="Kordes E."/>
            <person name="Lafuente M.J."/>
            <person name="Landt O."/>
            <person name="Louis E.J."/>
            <person name="Maarse A.C."/>
            <person name="Madania A."/>
            <person name="Mannhaupt G."/>
            <person name="Marck C."/>
            <person name="Martin R.P."/>
            <person name="Mewes H.-W."/>
            <person name="Michaux G."/>
            <person name="Paces V."/>
            <person name="Parle-McDermott A.G."/>
            <person name="Pearson B.M."/>
            <person name="Perrin A."/>
            <person name="Pettersson B."/>
            <person name="Poch O."/>
            <person name="Pohl T.M."/>
            <person name="Poirey R."/>
            <person name="Portetelle D."/>
            <person name="Pujol A."/>
            <person name="Purnelle B."/>
            <person name="Ramezani Rad M."/>
            <person name="Rechmann S."/>
            <person name="Schwager C."/>
            <person name="Schweizer M."/>
            <person name="Sor F."/>
            <person name="Sterky F."/>
            <person name="Tarassov I.A."/>
            <person name="Teodoru C."/>
            <person name="Tettelin H."/>
            <person name="Thierry A."/>
            <person name="Tobiasch E."/>
            <person name="Tzermia M."/>
            <person name="Uhlen M."/>
            <person name="Unseld M."/>
            <person name="Valens M."/>
            <person name="Vandenbol M."/>
            <person name="Vetter I."/>
            <person name="Vlcek C."/>
            <person name="Voet M."/>
            <person name="Volckaert G."/>
            <person name="Voss H."/>
            <person name="Wambutt R."/>
            <person name="Wedler H."/>
            <person name="Wiemann S."/>
            <person name="Winsor B."/>
            <person name="Wolfe K.H."/>
            <person name="Zollner A."/>
            <person name="Zumstein E."/>
            <person name="Kleine K."/>
        </authorList>
    </citation>
    <scope>NUCLEOTIDE SEQUENCE [LARGE SCALE GENOMIC DNA]</scope>
    <source>
        <strain>ATCC 204508 / S288c</strain>
    </source>
</reference>
<reference key="3">
    <citation type="journal article" date="2014" name="G3 (Bethesda)">
        <title>The reference genome sequence of Saccharomyces cerevisiae: Then and now.</title>
        <authorList>
            <person name="Engel S.R."/>
            <person name="Dietrich F.S."/>
            <person name="Fisk D.G."/>
            <person name="Binkley G."/>
            <person name="Balakrishnan R."/>
            <person name="Costanzo M.C."/>
            <person name="Dwight S.S."/>
            <person name="Hitz B.C."/>
            <person name="Karra K."/>
            <person name="Nash R.S."/>
            <person name="Weng S."/>
            <person name="Wong E.D."/>
            <person name="Lloyd P."/>
            <person name="Skrzypek M.S."/>
            <person name="Miyasato S.R."/>
            <person name="Simison M."/>
            <person name="Cherry J.M."/>
        </authorList>
    </citation>
    <scope>GENOME REANNOTATION</scope>
    <source>
        <strain>ATCC 204508 / S288c</strain>
    </source>
</reference>
<evidence type="ECO:0000305" key="1"/>
<evidence type="ECO:0000305" key="2">
    <source>
    </source>
</evidence>
<sequence>MTVKICDCEGECCKDSCHCGSTCLPSCSGGEKCKCDHSTGSPQCKSCGEKCKCETTCTCEKSKCNCEKC</sequence>
<dbReference type="EMBL" id="L29056">
    <property type="protein sequence ID" value="AAA66061.1"/>
    <property type="molecule type" value="Genomic_DNA"/>
</dbReference>
<dbReference type="EMBL" id="X87331">
    <property type="status" value="NOT_ANNOTATED_CDS"/>
    <property type="molecule type" value="Genomic_DNA"/>
</dbReference>
<dbReference type="EMBL" id="Z74939">
    <property type="status" value="NOT_ANNOTATED_CDS"/>
    <property type="molecule type" value="Genomic_DNA"/>
</dbReference>
<dbReference type="PIR" id="A55011">
    <property type="entry name" value="A55011"/>
</dbReference>
<dbReference type="SMR" id="P41902"/>
<dbReference type="BioGRID" id="34433">
    <property type="interactions" value="154"/>
</dbReference>
<dbReference type="DIP" id="DIP-5511N"/>
<dbReference type="IntAct" id="P41902">
    <property type="interactions" value="4"/>
</dbReference>
<dbReference type="PaxDb" id="4932-YOR031W"/>
<dbReference type="AGR" id="SGD:S000005557"/>
<dbReference type="SGD" id="S000005557">
    <property type="gene designation" value="CRS5"/>
</dbReference>
<dbReference type="eggNOG" id="KOG4738">
    <property type="taxonomic scope" value="Eukaryota"/>
</dbReference>
<dbReference type="HOGENOM" id="CLU_2777367_0_0_1"/>
<dbReference type="GO" id="GO:0005507">
    <property type="term" value="F:copper ion binding"/>
    <property type="evidence" value="ECO:0000314"/>
    <property type="project" value="SGD"/>
</dbReference>
<dbReference type="GO" id="GO:0010038">
    <property type="term" value="P:response to metal ion"/>
    <property type="evidence" value="ECO:0000315"/>
    <property type="project" value="SGD"/>
</dbReference>
<dbReference type="InterPro" id="IPR035715">
    <property type="entry name" value="Crs5"/>
</dbReference>
<dbReference type="Pfam" id="PF12809">
    <property type="entry name" value="Metallothi_Euk2"/>
    <property type="match status" value="1"/>
</dbReference>
<protein>
    <recommendedName>
        <fullName>Metallothionein-like protein CRS5</fullName>
    </recommendedName>
</protein>